<sequence length="69" mass="7605">MAISRGDLVRVKRPESYWYNEIGKVASVDTTGIKYNCVVRFEKVNYAGISGTEGGANTNNFAESELEKA</sequence>
<feature type="chain" id="PRO_0000204406" description="Photosystem I reaction center subunit IV">
    <location>
        <begin position="1"/>
        <end position="69"/>
    </location>
</feature>
<keyword id="KW-0472">Membrane</keyword>
<keyword id="KW-0602">Photosynthesis</keyword>
<keyword id="KW-0603">Photosystem I</keyword>
<keyword id="KW-0793">Thylakoid</keyword>
<name>PSAE_PROMP</name>
<protein>
    <recommendedName>
        <fullName>Photosystem I reaction center subunit IV</fullName>
    </recommendedName>
</protein>
<gene>
    <name type="primary">psaE</name>
    <name type="ordered locus">PMM0329</name>
</gene>
<dbReference type="EMBL" id="BX548174">
    <property type="protein sequence ID" value="CAE18788.1"/>
    <property type="molecule type" value="Genomic_DNA"/>
</dbReference>
<dbReference type="RefSeq" id="WP_011131966.1">
    <property type="nucleotide sequence ID" value="NC_005072.1"/>
</dbReference>
<dbReference type="SMR" id="Q7V2X3"/>
<dbReference type="STRING" id="59919.PMM0329"/>
<dbReference type="KEGG" id="pmm:PMM0329"/>
<dbReference type="eggNOG" id="ENOG503313D">
    <property type="taxonomic scope" value="Bacteria"/>
</dbReference>
<dbReference type="HOGENOM" id="CLU_136462_2_1_3"/>
<dbReference type="OrthoDB" id="427926at2"/>
<dbReference type="Proteomes" id="UP000001026">
    <property type="component" value="Chromosome"/>
</dbReference>
<dbReference type="GO" id="GO:0009538">
    <property type="term" value="C:photosystem I reaction center"/>
    <property type="evidence" value="ECO:0007669"/>
    <property type="project" value="InterPro"/>
</dbReference>
<dbReference type="GO" id="GO:0031676">
    <property type="term" value="C:plasma membrane-derived thylakoid membrane"/>
    <property type="evidence" value="ECO:0007669"/>
    <property type="project" value="UniProtKB-SubCell"/>
</dbReference>
<dbReference type="GO" id="GO:0015979">
    <property type="term" value="P:photosynthesis"/>
    <property type="evidence" value="ECO:0007669"/>
    <property type="project" value="UniProtKB-UniRule"/>
</dbReference>
<dbReference type="Gene3D" id="2.30.30.50">
    <property type="match status" value="1"/>
</dbReference>
<dbReference type="HAMAP" id="MF_00613">
    <property type="entry name" value="PSI_PsaE"/>
    <property type="match status" value="1"/>
</dbReference>
<dbReference type="InterPro" id="IPR008990">
    <property type="entry name" value="Elect_transpt_acc-like_dom_sf"/>
</dbReference>
<dbReference type="InterPro" id="IPR003375">
    <property type="entry name" value="PSI_PsaE"/>
</dbReference>
<dbReference type="NCBIfam" id="NF002745">
    <property type="entry name" value="PRK02749.1"/>
    <property type="match status" value="1"/>
</dbReference>
<dbReference type="PANTHER" id="PTHR34549">
    <property type="entry name" value="PHOTOSYSTEM I REACTION CENTER SUBUNIT IV A, CHLOROPLASTIC-RELATED"/>
    <property type="match status" value="1"/>
</dbReference>
<dbReference type="PANTHER" id="PTHR34549:SF2">
    <property type="entry name" value="PHOTOSYSTEM I SUBUNIT IV"/>
    <property type="match status" value="1"/>
</dbReference>
<dbReference type="Pfam" id="PF02427">
    <property type="entry name" value="PSI_PsaE"/>
    <property type="match status" value="1"/>
</dbReference>
<dbReference type="SUPFAM" id="SSF50090">
    <property type="entry name" value="Electron transport accessory proteins"/>
    <property type="match status" value="1"/>
</dbReference>
<accession>Q7V2X3</accession>
<proteinExistence type="inferred from homology"/>
<comment type="function">
    <text evidence="1">Stabilizes the interaction between PsaC and the PSI core, assists the docking of the ferredoxin to PSI and interacts with ferredoxin-NADP oxidoreductase.</text>
</comment>
<comment type="subcellular location">
    <subcellularLocation>
        <location evidence="1">Cellular thylakoid membrane</location>
        <topology evidence="1">Peripheral membrane protein</topology>
    </subcellularLocation>
</comment>
<comment type="similarity">
    <text evidence="2">Belongs to the PsaE family.</text>
</comment>
<reference key="1">
    <citation type="journal article" date="2003" name="Nature">
        <title>Genome divergence in two Prochlorococcus ecotypes reflects oceanic niche differentiation.</title>
        <authorList>
            <person name="Rocap G."/>
            <person name="Larimer F.W."/>
            <person name="Lamerdin J.E."/>
            <person name="Malfatti S."/>
            <person name="Chain P."/>
            <person name="Ahlgren N.A."/>
            <person name="Arellano A."/>
            <person name="Coleman M."/>
            <person name="Hauser L."/>
            <person name="Hess W.R."/>
            <person name="Johnson Z.I."/>
            <person name="Land M.L."/>
            <person name="Lindell D."/>
            <person name="Post A.F."/>
            <person name="Regala W."/>
            <person name="Shah M."/>
            <person name="Shaw S.L."/>
            <person name="Steglich C."/>
            <person name="Sullivan M.B."/>
            <person name="Ting C.S."/>
            <person name="Tolonen A."/>
            <person name="Webb E.A."/>
            <person name="Zinser E.R."/>
            <person name="Chisholm S.W."/>
        </authorList>
    </citation>
    <scope>NUCLEOTIDE SEQUENCE [LARGE SCALE GENOMIC DNA]</scope>
    <source>
        <strain>CCMP1986 / NIES-2087 / MED4</strain>
    </source>
</reference>
<organism>
    <name type="scientific">Prochlorococcus marinus subsp. pastoris (strain CCMP1986 / NIES-2087 / MED4)</name>
    <dbReference type="NCBI Taxonomy" id="59919"/>
    <lineage>
        <taxon>Bacteria</taxon>
        <taxon>Bacillati</taxon>
        <taxon>Cyanobacteriota</taxon>
        <taxon>Cyanophyceae</taxon>
        <taxon>Synechococcales</taxon>
        <taxon>Prochlorococcaceae</taxon>
        <taxon>Prochlorococcus</taxon>
    </lineage>
</organism>
<evidence type="ECO:0000250" key="1"/>
<evidence type="ECO:0000305" key="2"/>